<sequence>MNYPHPIIAREGWPFIAIAAVVALLIHFFAGFGVSWLFWLLLIFVVQFFRDPARPIPTQANAVLCPADGRIVAVETAHDPYANREALKISVFMNVFNVHSQRSPVDGAISKVEYFPGAYLNAAVDKASTENERNAIVIETAGGQTVTSVQIAGLIARRILCYVRAGEPLTRGQRYGFIRFGSRVDVYLPVGSRPRVSIGEKVSASSTILAEL</sequence>
<name>PSD_PARXL</name>
<comment type="function">
    <text evidence="1">Catalyzes the formation of phosphatidylethanolamine (PtdEtn) from phosphatidylserine (PtdSer).</text>
</comment>
<comment type="catalytic activity">
    <reaction evidence="1">
        <text>a 1,2-diacyl-sn-glycero-3-phospho-L-serine + H(+) = a 1,2-diacyl-sn-glycero-3-phosphoethanolamine + CO2</text>
        <dbReference type="Rhea" id="RHEA:20828"/>
        <dbReference type="ChEBI" id="CHEBI:15378"/>
        <dbReference type="ChEBI" id="CHEBI:16526"/>
        <dbReference type="ChEBI" id="CHEBI:57262"/>
        <dbReference type="ChEBI" id="CHEBI:64612"/>
        <dbReference type="EC" id="4.1.1.65"/>
    </reaction>
</comment>
<comment type="cofactor">
    <cofactor evidence="1">
        <name>pyruvate</name>
        <dbReference type="ChEBI" id="CHEBI:15361"/>
    </cofactor>
    <text evidence="1">Binds 1 pyruvoyl group covalently per subunit.</text>
</comment>
<comment type="pathway">
    <text evidence="1">Phospholipid metabolism; phosphatidylethanolamine biosynthesis; phosphatidylethanolamine from CDP-diacylglycerol: step 2/2.</text>
</comment>
<comment type="subunit">
    <text evidence="1">Heterodimer of a large membrane-associated beta subunit and a small pyruvoyl-containing alpha subunit.</text>
</comment>
<comment type="subcellular location">
    <subcellularLocation>
        <location evidence="1">Cell membrane</location>
        <topology evidence="1">Peripheral membrane protein</topology>
    </subcellularLocation>
</comment>
<comment type="PTM">
    <text evidence="1">Is synthesized initially as an inactive proenzyme. Formation of the active enzyme involves a self-maturation process in which the active site pyruvoyl group is generated from an internal serine residue via an autocatalytic post-translational modification. Two non-identical subunits are generated from the proenzyme in this reaction, and the pyruvate is formed at the N-terminus of the alpha chain, which is derived from the carboxyl end of the proenzyme. The post-translation cleavage follows an unusual pathway, termed non-hydrolytic serinolysis, in which the side chain hydroxyl group of the serine supplies its oxygen atom to form the C-terminus of the beta chain, while the remainder of the serine residue undergoes an oxidative deamination to produce ammonia and the pyruvoyl prosthetic group on the alpha chain.</text>
</comment>
<comment type="similarity">
    <text evidence="1">Belongs to the phosphatidylserine decarboxylase family. PSD-A subfamily.</text>
</comment>
<reference key="1">
    <citation type="journal article" date="2006" name="Proc. Natl. Acad. Sci. U.S.A.">
        <title>Burkholderia xenovorans LB400 harbors a multi-replicon, 9.73-Mbp genome shaped for versatility.</title>
        <authorList>
            <person name="Chain P.S.G."/>
            <person name="Denef V.J."/>
            <person name="Konstantinidis K.T."/>
            <person name="Vergez L.M."/>
            <person name="Agullo L."/>
            <person name="Reyes V.L."/>
            <person name="Hauser L."/>
            <person name="Cordova M."/>
            <person name="Gomez L."/>
            <person name="Gonzalez M."/>
            <person name="Land M."/>
            <person name="Lao V."/>
            <person name="Larimer F."/>
            <person name="LiPuma J.J."/>
            <person name="Mahenthiralingam E."/>
            <person name="Malfatti S.A."/>
            <person name="Marx C.J."/>
            <person name="Parnell J.J."/>
            <person name="Ramette A."/>
            <person name="Richardson P."/>
            <person name="Seeger M."/>
            <person name="Smith D."/>
            <person name="Spilker T."/>
            <person name="Sul W.J."/>
            <person name="Tsoi T.V."/>
            <person name="Ulrich L.E."/>
            <person name="Zhulin I.B."/>
            <person name="Tiedje J.M."/>
        </authorList>
    </citation>
    <scope>NUCLEOTIDE SEQUENCE [LARGE SCALE GENOMIC DNA]</scope>
    <source>
        <strain>LB400</strain>
    </source>
</reference>
<accession>Q142I5</accession>
<proteinExistence type="inferred from homology"/>
<organism>
    <name type="scientific">Paraburkholderia xenovorans (strain LB400)</name>
    <dbReference type="NCBI Taxonomy" id="266265"/>
    <lineage>
        <taxon>Bacteria</taxon>
        <taxon>Pseudomonadati</taxon>
        <taxon>Pseudomonadota</taxon>
        <taxon>Betaproteobacteria</taxon>
        <taxon>Burkholderiales</taxon>
        <taxon>Burkholderiaceae</taxon>
        <taxon>Paraburkholderia</taxon>
    </lineage>
</organism>
<protein>
    <recommendedName>
        <fullName evidence="1">Phosphatidylserine decarboxylase proenzyme</fullName>
        <ecNumber evidence="1">4.1.1.65</ecNumber>
    </recommendedName>
    <component>
        <recommendedName>
            <fullName evidence="1">Phosphatidylserine decarboxylase alpha chain</fullName>
        </recommendedName>
    </component>
    <component>
        <recommendedName>
            <fullName evidence="1">Phosphatidylserine decarboxylase beta chain</fullName>
        </recommendedName>
    </component>
</protein>
<feature type="chain" id="PRO_0000262199" description="Phosphatidylserine decarboxylase beta chain" evidence="1">
    <location>
        <begin position="1"/>
        <end position="181"/>
    </location>
</feature>
<feature type="chain" id="PRO_0000262200" description="Phosphatidylserine decarboxylase alpha chain" evidence="1">
    <location>
        <begin position="182"/>
        <end position="212"/>
    </location>
</feature>
<feature type="active site" description="Schiff-base intermediate with substrate; via pyruvic acid" evidence="1">
    <location>
        <position position="182"/>
    </location>
</feature>
<feature type="site" description="Cleavage (non-hydrolytic); by autocatalysis" evidence="1">
    <location>
        <begin position="181"/>
        <end position="182"/>
    </location>
</feature>
<feature type="modified residue" description="Pyruvic acid (Ser); by autocatalysis" evidence="1">
    <location>
        <position position="182"/>
    </location>
</feature>
<evidence type="ECO:0000255" key="1">
    <source>
        <dbReference type="HAMAP-Rule" id="MF_00664"/>
    </source>
</evidence>
<dbReference type="EC" id="4.1.1.65" evidence="1"/>
<dbReference type="EMBL" id="CP000270">
    <property type="protein sequence ID" value="ABE29754.1"/>
    <property type="molecule type" value="Genomic_DNA"/>
</dbReference>
<dbReference type="RefSeq" id="WP_011487483.1">
    <property type="nucleotide sequence ID" value="NZ_CP008760.1"/>
</dbReference>
<dbReference type="STRING" id="266265.Bxe_A3228"/>
<dbReference type="KEGG" id="bxb:DR64_930"/>
<dbReference type="KEGG" id="bxe:Bxe_A3228"/>
<dbReference type="PATRIC" id="fig|266265.5.peg.1252"/>
<dbReference type="eggNOG" id="COG0688">
    <property type="taxonomic scope" value="Bacteria"/>
</dbReference>
<dbReference type="OrthoDB" id="9790893at2"/>
<dbReference type="UniPathway" id="UPA00558">
    <property type="reaction ID" value="UER00616"/>
</dbReference>
<dbReference type="Proteomes" id="UP000001817">
    <property type="component" value="Chromosome 1"/>
</dbReference>
<dbReference type="GO" id="GO:0005886">
    <property type="term" value="C:plasma membrane"/>
    <property type="evidence" value="ECO:0007669"/>
    <property type="project" value="UniProtKB-SubCell"/>
</dbReference>
<dbReference type="GO" id="GO:0004609">
    <property type="term" value="F:phosphatidylserine decarboxylase activity"/>
    <property type="evidence" value="ECO:0007669"/>
    <property type="project" value="UniProtKB-UniRule"/>
</dbReference>
<dbReference type="GO" id="GO:0006646">
    <property type="term" value="P:phosphatidylethanolamine biosynthetic process"/>
    <property type="evidence" value="ECO:0007669"/>
    <property type="project" value="UniProtKB-UniRule"/>
</dbReference>
<dbReference type="HAMAP" id="MF_00664">
    <property type="entry name" value="PS_decarb_PSD_A"/>
    <property type="match status" value="1"/>
</dbReference>
<dbReference type="InterPro" id="IPR003817">
    <property type="entry name" value="PS_Dcarbxylase"/>
</dbReference>
<dbReference type="InterPro" id="IPR033175">
    <property type="entry name" value="PSD-A"/>
</dbReference>
<dbReference type="NCBIfam" id="TIGR00164">
    <property type="entry name" value="AS_decarb"/>
    <property type="match status" value="1"/>
</dbReference>
<dbReference type="NCBIfam" id="NF003678">
    <property type="entry name" value="PRK05305.1-2"/>
    <property type="match status" value="1"/>
</dbReference>
<dbReference type="NCBIfam" id="NF003680">
    <property type="entry name" value="PRK05305.1-5"/>
    <property type="match status" value="1"/>
</dbReference>
<dbReference type="NCBIfam" id="NF003685">
    <property type="entry name" value="PRK05305.2-5"/>
    <property type="match status" value="1"/>
</dbReference>
<dbReference type="PANTHER" id="PTHR35809">
    <property type="entry name" value="ARCHAETIDYLSERINE DECARBOXYLASE PROENZYME-RELATED"/>
    <property type="match status" value="1"/>
</dbReference>
<dbReference type="PANTHER" id="PTHR35809:SF1">
    <property type="entry name" value="ARCHAETIDYLSERINE DECARBOXYLASE PROENZYME-RELATED"/>
    <property type="match status" value="1"/>
</dbReference>
<dbReference type="Pfam" id="PF02666">
    <property type="entry name" value="PS_Dcarbxylase"/>
    <property type="match status" value="1"/>
</dbReference>
<gene>
    <name evidence="1" type="primary">psd</name>
    <name type="ordered locus">Bxeno_A1216</name>
    <name type="ORF">Bxe_A3228</name>
</gene>
<keyword id="KW-1003">Cell membrane</keyword>
<keyword id="KW-0210">Decarboxylase</keyword>
<keyword id="KW-0444">Lipid biosynthesis</keyword>
<keyword id="KW-0443">Lipid metabolism</keyword>
<keyword id="KW-0456">Lyase</keyword>
<keyword id="KW-0472">Membrane</keyword>
<keyword id="KW-0594">Phospholipid biosynthesis</keyword>
<keyword id="KW-1208">Phospholipid metabolism</keyword>
<keyword id="KW-0670">Pyruvate</keyword>
<keyword id="KW-1185">Reference proteome</keyword>
<keyword id="KW-0865">Zymogen</keyword>